<reference key="1">
    <citation type="submission" date="2002-12" db="EMBL/GenBank/DDBJ databases">
        <title>Complete genome sequence of Vibrio vulnificus CMCP6.</title>
        <authorList>
            <person name="Rhee J.H."/>
            <person name="Kim S.Y."/>
            <person name="Chung S.S."/>
            <person name="Kim J.J."/>
            <person name="Moon Y.H."/>
            <person name="Jeong H."/>
            <person name="Choy H.E."/>
        </authorList>
    </citation>
    <scope>NUCLEOTIDE SEQUENCE [LARGE SCALE GENOMIC DNA]</scope>
    <source>
        <strain>CMCP6</strain>
    </source>
</reference>
<feature type="chain" id="PRO_0000179819" description="Putative N-acetylmannosamine-6-phosphate 2-epimerase">
    <location>
        <begin position="1"/>
        <end position="225"/>
    </location>
</feature>
<organism>
    <name type="scientific">Vibrio vulnificus (strain CMCP6)</name>
    <dbReference type="NCBI Taxonomy" id="216895"/>
    <lineage>
        <taxon>Bacteria</taxon>
        <taxon>Pseudomonadati</taxon>
        <taxon>Pseudomonadota</taxon>
        <taxon>Gammaproteobacteria</taxon>
        <taxon>Vibrionales</taxon>
        <taxon>Vibrionaceae</taxon>
        <taxon>Vibrio</taxon>
    </lineage>
</organism>
<protein>
    <recommendedName>
        <fullName evidence="1">Putative N-acetylmannosamine-6-phosphate 2-epimerase</fullName>
        <ecNumber evidence="1">5.1.3.9</ecNumber>
    </recommendedName>
    <alternativeName>
        <fullName evidence="1">ManNAc-6-P epimerase</fullName>
    </alternativeName>
</protein>
<name>NANE_VIBVU</name>
<proteinExistence type="inferred from homology"/>
<keyword id="KW-0119">Carbohydrate metabolism</keyword>
<keyword id="KW-0413">Isomerase</keyword>
<accession>Q8D613</accession>
<evidence type="ECO:0000255" key="1">
    <source>
        <dbReference type="HAMAP-Rule" id="MF_01235"/>
    </source>
</evidence>
<sequence length="225" mass="23853">MLSGQTVVSIQPVVGSPLDKTEFIVAMAVAAEQAGAKALRIEGVENVRHVSQATNVPIIGIVKRDLQDSPVRITPFVCDVDALATAGATIIAFDATDRQRPESRETIANAIKNSGCFAMADCSCFADGQWAAQIGVDIIGSTLSGYVGEIEPTEPDLELVKQFSSAGFFTMAEGRYNTPQLAAKAIENGAVAVTVGSAITRMEVVTHWFNSATQAVRQNNESISY</sequence>
<gene>
    <name evidence="1" type="primary">nanE</name>
    <name type="ordered locus">VV2_0734</name>
</gene>
<comment type="function">
    <text evidence="1">Converts N-acetylmannosamine-6-phosphate (ManNAc-6-P) to N-acetylglucosamine-6-phosphate (GlcNAc-6-P).</text>
</comment>
<comment type="catalytic activity">
    <reaction evidence="1">
        <text>an N-acyl-D-glucosamine 6-phosphate = an N-acyl-D-mannosamine 6-phosphate</text>
        <dbReference type="Rhea" id="RHEA:23932"/>
        <dbReference type="ChEBI" id="CHEBI:57599"/>
        <dbReference type="ChEBI" id="CHEBI:57666"/>
        <dbReference type="EC" id="5.1.3.9"/>
    </reaction>
</comment>
<comment type="pathway">
    <text evidence="1">Amino-sugar metabolism; N-acetylneuraminate degradation; D-fructose 6-phosphate from N-acetylneuraminate: step 3/5.</text>
</comment>
<comment type="similarity">
    <text evidence="1">Belongs to the NanE family.</text>
</comment>
<dbReference type="EC" id="5.1.3.9" evidence="1"/>
<dbReference type="EMBL" id="AE016796">
    <property type="protein sequence ID" value="AAO07666.1"/>
    <property type="molecule type" value="Genomic_DNA"/>
</dbReference>
<dbReference type="RefSeq" id="WP_011081663.1">
    <property type="nucleotide sequence ID" value="NC_004460.2"/>
</dbReference>
<dbReference type="SMR" id="Q8D613"/>
<dbReference type="KEGG" id="vvu:VV2_0734"/>
<dbReference type="HOGENOM" id="CLU_086300_0_0_6"/>
<dbReference type="UniPathway" id="UPA00629">
    <property type="reaction ID" value="UER00682"/>
</dbReference>
<dbReference type="Proteomes" id="UP000002275">
    <property type="component" value="Chromosome 2"/>
</dbReference>
<dbReference type="GO" id="GO:0005829">
    <property type="term" value="C:cytosol"/>
    <property type="evidence" value="ECO:0007669"/>
    <property type="project" value="TreeGrafter"/>
</dbReference>
<dbReference type="GO" id="GO:0047465">
    <property type="term" value="F:N-acylglucosamine-6-phosphate 2-epimerase activity"/>
    <property type="evidence" value="ECO:0007669"/>
    <property type="project" value="UniProtKB-EC"/>
</dbReference>
<dbReference type="GO" id="GO:0005975">
    <property type="term" value="P:carbohydrate metabolic process"/>
    <property type="evidence" value="ECO:0007669"/>
    <property type="project" value="UniProtKB-UniRule"/>
</dbReference>
<dbReference type="GO" id="GO:0006053">
    <property type="term" value="P:N-acetylmannosamine catabolic process"/>
    <property type="evidence" value="ECO:0007669"/>
    <property type="project" value="TreeGrafter"/>
</dbReference>
<dbReference type="GO" id="GO:0019262">
    <property type="term" value="P:N-acetylneuraminate catabolic process"/>
    <property type="evidence" value="ECO:0007669"/>
    <property type="project" value="UniProtKB-UniRule"/>
</dbReference>
<dbReference type="CDD" id="cd04729">
    <property type="entry name" value="NanE"/>
    <property type="match status" value="1"/>
</dbReference>
<dbReference type="FunFam" id="3.20.20.70:FF:000035">
    <property type="entry name" value="Putative N-acetylmannosamine-6-phosphate 2-epimerase"/>
    <property type="match status" value="1"/>
</dbReference>
<dbReference type="Gene3D" id="3.20.20.70">
    <property type="entry name" value="Aldolase class I"/>
    <property type="match status" value="1"/>
</dbReference>
<dbReference type="HAMAP" id="MF_01235">
    <property type="entry name" value="ManNAc6P_epimer"/>
    <property type="match status" value="1"/>
</dbReference>
<dbReference type="InterPro" id="IPR013785">
    <property type="entry name" value="Aldolase_TIM"/>
</dbReference>
<dbReference type="InterPro" id="IPR007260">
    <property type="entry name" value="NanE"/>
</dbReference>
<dbReference type="InterPro" id="IPR011060">
    <property type="entry name" value="RibuloseP-bd_barrel"/>
</dbReference>
<dbReference type="NCBIfam" id="NF002231">
    <property type="entry name" value="PRK01130.1"/>
    <property type="match status" value="1"/>
</dbReference>
<dbReference type="PANTHER" id="PTHR36204">
    <property type="entry name" value="N-ACETYLMANNOSAMINE-6-PHOSPHATE 2-EPIMERASE-RELATED"/>
    <property type="match status" value="1"/>
</dbReference>
<dbReference type="PANTHER" id="PTHR36204:SF1">
    <property type="entry name" value="N-ACETYLMANNOSAMINE-6-PHOSPHATE 2-EPIMERASE-RELATED"/>
    <property type="match status" value="1"/>
</dbReference>
<dbReference type="Pfam" id="PF04131">
    <property type="entry name" value="NanE"/>
    <property type="match status" value="1"/>
</dbReference>
<dbReference type="SUPFAM" id="SSF51366">
    <property type="entry name" value="Ribulose-phoshate binding barrel"/>
    <property type="match status" value="1"/>
</dbReference>